<organism>
    <name type="scientific">Salmonella paratyphi A (strain ATCC 9150 / SARB42)</name>
    <dbReference type="NCBI Taxonomy" id="295319"/>
    <lineage>
        <taxon>Bacteria</taxon>
        <taxon>Pseudomonadati</taxon>
        <taxon>Pseudomonadota</taxon>
        <taxon>Gammaproteobacteria</taxon>
        <taxon>Enterobacterales</taxon>
        <taxon>Enterobacteriaceae</taxon>
        <taxon>Salmonella</taxon>
    </lineage>
</organism>
<protein>
    <recommendedName>
        <fullName evidence="1">NADH-quinone oxidoreductase subunit H</fullName>
        <ecNumber evidence="1">7.1.1.-</ecNumber>
    </recommendedName>
    <alternativeName>
        <fullName evidence="1">NADH dehydrogenase I subunit H</fullName>
    </alternativeName>
    <alternativeName>
        <fullName evidence="1">NDH-1 subunit H</fullName>
    </alternativeName>
</protein>
<feature type="chain" id="PRO_0000244950" description="NADH-quinone oxidoreductase subunit H">
    <location>
        <begin position="1"/>
        <end position="325"/>
    </location>
</feature>
<feature type="transmembrane region" description="Helical" evidence="1">
    <location>
        <begin position="11"/>
        <end position="31"/>
    </location>
</feature>
<feature type="transmembrane region" description="Helical" evidence="1">
    <location>
        <begin position="50"/>
        <end position="69"/>
    </location>
</feature>
<feature type="transmembrane region" description="Helical" evidence="1">
    <location>
        <begin position="81"/>
        <end position="101"/>
    </location>
</feature>
<feature type="transmembrane region" description="Helical" evidence="1">
    <location>
        <begin position="114"/>
        <end position="134"/>
    </location>
</feature>
<feature type="transmembrane region" description="Helical" evidence="1">
    <location>
        <begin position="154"/>
        <end position="174"/>
    </location>
</feature>
<feature type="transmembrane region" description="Helical" evidence="1">
    <location>
        <begin position="186"/>
        <end position="206"/>
    </location>
</feature>
<feature type="transmembrane region" description="Helical" evidence="1">
    <location>
        <begin position="237"/>
        <end position="257"/>
    </location>
</feature>
<feature type="transmembrane region" description="Helical" evidence="1">
    <location>
        <begin position="265"/>
        <end position="285"/>
    </location>
</feature>
<feature type="transmembrane region" description="Helical" evidence="1">
    <location>
        <begin position="304"/>
        <end position="324"/>
    </location>
</feature>
<comment type="function">
    <text evidence="1">NDH-1 shuttles electrons from NADH, via FMN and iron-sulfur (Fe-S) centers, to quinones in the respiratory chain. The immediate electron acceptor for the enzyme in this species is believed to be ubiquinone. Couples the redox reaction to proton translocation (for every two electrons transferred, four hydrogen ions are translocated across the cytoplasmic membrane), and thus conserves the redox energy in a proton gradient. This subunit may bind ubiquinone.</text>
</comment>
<comment type="catalytic activity">
    <reaction evidence="1">
        <text>a quinone + NADH + 5 H(+)(in) = a quinol + NAD(+) + 4 H(+)(out)</text>
        <dbReference type="Rhea" id="RHEA:57888"/>
        <dbReference type="ChEBI" id="CHEBI:15378"/>
        <dbReference type="ChEBI" id="CHEBI:24646"/>
        <dbReference type="ChEBI" id="CHEBI:57540"/>
        <dbReference type="ChEBI" id="CHEBI:57945"/>
        <dbReference type="ChEBI" id="CHEBI:132124"/>
    </reaction>
</comment>
<comment type="subunit">
    <text evidence="1">NDH-1 is composed of 13 different subunits. Subunits NuoA, H, J, K, L, M, N constitute the membrane sector of the complex.</text>
</comment>
<comment type="subcellular location">
    <subcellularLocation>
        <location evidence="1">Cell inner membrane</location>
        <topology evidence="1">Multi-pass membrane protein</topology>
    </subcellularLocation>
</comment>
<comment type="similarity">
    <text evidence="1">Belongs to the complex I subunit 1 family.</text>
</comment>
<sequence length="325" mass="36292">MSWITPDLIEILLSILKAVVILLVVVTCGAFMSFGERRLLGLFQNRYGPNRVGWGGSLQLVADMIKMFFKEDWIPKFSDRVIFTLAPMIAFTSLLLSFAIVPVSPNWVVADLNIGILFFLMMAGLAVYAVLFAGWSSNNKYSLLGAMRASAQTVSYEVFLGLSLMGVVAQAGSFNMTDIVNNQAHLWNVIPQFFGFVTFAIAGVAVCHRHPFDQPEAEQELADGYHIEYSGMKFGLFFVGEYIGIVTVSALMVTLFFGGWHGPFLPPFVWFALKTAFFMMMFILIRASLPRPRYDQVMSFGWKVCLPLTLINLLVTAAVILWQAQ</sequence>
<proteinExistence type="inferred from homology"/>
<reference key="1">
    <citation type="journal article" date="2004" name="Nat. Genet.">
        <title>Comparison of genome degradation in Paratyphi A and Typhi, human-restricted serovars of Salmonella enterica that cause typhoid.</title>
        <authorList>
            <person name="McClelland M."/>
            <person name="Sanderson K.E."/>
            <person name="Clifton S.W."/>
            <person name="Latreille P."/>
            <person name="Porwollik S."/>
            <person name="Sabo A."/>
            <person name="Meyer R."/>
            <person name="Bieri T."/>
            <person name="Ozersky P."/>
            <person name="McLellan M."/>
            <person name="Harkins C.R."/>
            <person name="Wang C."/>
            <person name="Nguyen C."/>
            <person name="Berghoff A."/>
            <person name="Elliott G."/>
            <person name="Kohlberg S."/>
            <person name="Strong C."/>
            <person name="Du F."/>
            <person name="Carter J."/>
            <person name="Kremizki C."/>
            <person name="Layman D."/>
            <person name="Leonard S."/>
            <person name="Sun H."/>
            <person name="Fulton L."/>
            <person name="Nash W."/>
            <person name="Miner T."/>
            <person name="Minx P."/>
            <person name="Delehaunty K."/>
            <person name="Fronick C."/>
            <person name="Magrini V."/>
            <person name="Nhan M."/>
            <person name="Warren W."/>
            <person name="Florea L."/>
            <person name="Spieth J."/>
            <person name="Wilson R.K."/>
        </authorList>
    </citation>
    <scope>NUCLEOTIDE SEQUENCE [LARGE SCALE GENOMIC DNA]</scope>
    <source>
        <strain>ATCC 9150 / SARB42</strain>
    </source>
</reference>
<dbReference type="EC" id="7.1.1.-" evidence="1"/>
<dbReference type="EMBL" id="CP000026">
    <property type="protein sequence ID" value="AAV76544.1"/>
    <property type="molecule type" value="Genomic_DNA"/>
</dbReference>
<dbReference type="RefSeq" id="WP_000118515.1">
    <property type="nucleotide sequence ID" value="NC_006511.1"/>
</dbReference>
<dbReference type="SMR" id="Q5PN59"/>
<dbReference type="GeneID" id="66756771"/>
<dbReference type="KEGG" id="spt:SPA0542"/>
<dbReference type="HOGENOM" id="CLU_015134_0_1_6"/>
<dbReference type="Proteomes" id="UP000008185">
    <property type="component" value="Chromosome"/>
</dbReference>
<dbReference type="GO" id="GO:0005886">
    <property type="term" value="C:plasma membrane"/>
    <property type="evidence" value="ECO:0007669"/>
    <property type="project" value="UniProtKB-SubCell"/>
</dbReference>
<dbReference type="GO" id="GO:0003954">
    <property type="term" value="F:NADH dehydrogenase activity"/>
    <property type="evidence" value="ECO:0007669"/>
    <property type="project" value="TreeGrafter"/>
</dbReference>
<dbReference type="GO" id="GO:0016655">
    <property type="term" value="F:oxidoreductase activity, acting on NAD(P)H, quinone or similar compound as acceptor"/>
    <property type="evidence" value="ECO:0007669"/>
    <property type="project" value="UniProtKB-UniRule"/>
</dbReference>
<dbReference type="GO" id="GO:0048038">
    <property type="term" value="F:quinone binding"/>
    <property type="evidence" value="ECO:0007669"/>
    <property type="project" value="UniProtKB-KW"/>
</dbReference>
<dbReference type="GO" id="GO:0009060">
    <property type="term" value="P:aerobic respiration"/>
    <property type="evidence" value="ECO:0007669"/>
    <property type="project" value="TreeGrafter"/>
</dbReference>
<dbReference type="HAMAP" id="MF_01350">
    <property type="entry name" value="NDH1_NuoH"/>
    <property type="match status" value="1"/>
</dbReference>
<dbReference type="InterPro" id="IPR001694">
    <property type="entry name" value="NADH_UbQ_OxRdtase_su1/FPO"/>
</dbReference>
<dbReference type="InterPro" id="IPR018086">
    <property type="entry name" value="NADH_UbQ_OxRdtase_su1_CS"/>
</dbReference>
<dbReference type="NCBIfam" id="NF004740">
    <property type="entry name" value="PRK06076.1-1"/>
    <property type="match status" value="1"/>
</dbReference>
<dbReference type="NCBIfam" id="NF004741">
    <property type="entry name" value="PRK06076.1-2"/>
    <property type="match status" value="1"/>
</dbReference>
<dbReference type="PANTHER" id="PTHR11432">
    <property type="entry name" value="NADH DEHYDROGENASE SUBUNIT 1"/>
    <property type="match status" value="1"/>
</dbReference>
<dbReference type="PANTHER" id="PTHR11432:SF3">
    <property type="entry name" value="NADH-UBIQUINONE OXIDOREDUCTASE CHAIN 1"/>
    <property type="match status" value="1"/>
</dbReference>
<dbReference type="Pfam" id="PF00146">
    <property type="entry name" value="NADHdh"/>
    <property type="match status" value="1"/>
</dbReference>
<dbReference type="PROSITE" id="PS00667">
    <property type="entry name" value="COMPLEX1_ND1_1"/>
    <property type="match status" value="1"/>
</dbReference>
<dbReference type="PROSITE" id="PS00668">
    <property type="entry name" value="COMPLEX1_ND1_2"/>
    <property type="match status" value="1"/>
</dbReference>
<name>NUOH_SALPA</name>
<evidence type="ECO:0000255" key="1">
    <source>
        <dbReference type="HAMAP-Rule" id="MF_01350"/>
    </source>
</evidence>
<accession>Q5PN59</accession>
<keyword id="KW-0997">Cell inner membrane</keyword>
<keyword id="KW-1003">Cell membrane</keyword>
<keyword id="KW-0472">Membrane</keyword>
<keyword id="KW-0520">NAD</keyword>
<keyword id="KW-0874">Quinone</keyword>
<keyword id="KW-1278">Translocase</keyword>
<keyword id="KW-0812">Transmembrane</keyword>
<keyword id="KW-1133">Transmembrane helix</keyword>
<keyword id="KW-0830">Ubiquinone</keyword>
<gene>
    <name evidence="1" type="primary">nuoH</name>
    <name type="ordered locus">SPA0542</name>
</gene>